<keyword id="KW-0002">3D-structure</keyword>
<keyword id="KW-0903">Direct protein sequencing</keyword>
<keyword id="KW-0496">Mitochondrion</keyword>
<keyword id="KW-1185">Reference proteome</keyword>
<keyword id="KW-0687">Ribonucleoprotein</keyword>
<keyword id="KW-0689">Ribosomal protein</keyword>
<keyword id="KW-0809">Transit peptide</keyword>
<dbReference type="EMBL" id="M22116">
    <property type="protein sequence ID" value="AAA34794.1"/>
    <property type="molecule type" value="Genomic_DNA"/>
</dbReference>
<dbReference type="EMBL" id="X77114">
    <property type="protein sequence ID" value="CAA54379.1"/>
    <property type="molecule type" value="Genomic_DNA"/>
</dbReference>
<dbReference type="EMBL" id="Z71281">
    <property type="protein sequence ID" value="CAA95864.1"/>
    <property type="molecule type" value="Genomic_DNA"/>
</dbReference>
<dbReference type="EMBL" id="AY693088">
    <property type="protein sequence ID" value="AAT93107.1"/>
    <property type="molecule type" value="Genomic_DNA"/>
</dbReference>
<dbReference type="EMBL" id="BK006947">
    <property type="protein sequence ID" value="DAA10538.1"/>
    <property type="molecule type" value="Genomic_DNA"/>
</dbReference>
<dbReference type="PIR" id="S62914">
    <property type="entry name" value="R6BYM7"/>
</dbReference>
<dbReference type="RefSeq" id="NP_014393.1">
    <property type="nucleotide sequence ID" value="NM_001182844.1"/>
</dbReference>
<dbReference type="PDB" id="3J6B">
    <property type="method" value="EM"/>
    <property type="resolution" value="3.20 A"/>
    <property type="chains" value="R=1-371"/>
</dbReference>
<dbReference type="PDB" id="5MRC">
    <property type="method" value="EM"/>
    <property type="resolution" value="3.25 A"/>
    <property type="chains" value="R=35-371"/>
</dbReference>
<dbReference type="PDB" id="5MRE">
    <property type="method" value="EM"/>
    <property type="resolution" value="3.75 A"/>
    <property type="chains" value="R=35-371"/>
</dbReference>
<dbReference type="PDB" id="5MRF">
    <property type="method" value="EM"/>
    <property type="resolution" value="4.97 A"/>
    <property type="chains" value="R=35-371"/>
</dbReference>
<dbReference type="PDBsum" id="3J6B"/>
<dbReference type="PDBsum" id="5MRC"/>
<dbReference type="PDBsum" id="5MRE"/>
<dbReference type="PDBsum" id="5MRF"/>
<dbReference type="EMDB" id="EMD-3551"/>
<dbReference type="EMDB" id="EMD-3552"/>
<dbReference type="EMDB" id="EMD-3553"/>
<dbReference type="SMR" id="P12687"/>
<dbReference type="BioGRID" id="35820">
    <property type="interactions" value="258"/>
</dbReference>
<dbReference type="ComplexPortal" id="CPX-1602">
    <property type="entry name" value="54S mitochondrial large ribosomal subunit"/>
</dbReference>
<dbReference type="DIP" id="DIP-5620N"/>
<dbReference type="FunCoup" id="P12687">
    <property type="interactions" value="352"/>
</dbReference>
<dbReference type="IntAct" id="P12687">
    <property type="interactions" value="77"/>
</dbReference>
<dbReference type="MINT" id="P12687"/>
<dbReference type="STRING" id="4932.YNL005C"/>
<dbReference type="iPTMnet" id="P12687"/>
<dbReference type="PaxDb" id="4932-YNL005C"/>
<dbReference type="PeptideAtlas" id="P12687"/>
<dbReference type="EnsemblFungi" id="YNL005C_mRNA">
    <property type="protein sequence ID" value="YNL005C"/>
    <property type="gene ID" value="YNL005C"/>
</dbReference>
<dbReference type="GeneID" id="855727"/>
<dbReference type="KEGG" id="sce:YNL005C"/>
<dbReference type="AGR" id="SGD:S000004950"/>
<dbReference type="SGD" id="S000004950">
    <property type="gene designation" value="MRP7"/>
</dbReference>
<dbReference type="VEuPathDB" id="FungiDB:YNL005C"/>
<dbReference type="eggNOG" id="KOG4600">
    <property type="taxonomic scope" value="Eukaryota"/>
</dbReference>
<dbReference type="GeneTree" id="ENSGT00960000189216"/>
<dbReference type="HOGENOM" id="CLU_063752_0_0_1"/>
<dbReference type="InParanoid" id="P12687"/>
<dbReference type="OMA" id="YLDPFHP"/>
<dbReference type="OrthoDB" id="1867012at2759"/>
<dbReference type="BioCyc" id="YEAST:G3O-33047-MONOMER"/>
<dbReference type="BioGRID-ORCS" id="855727">
    <property type="hits" value="6 hits in 10 CRISPR screens"/>
</dbReference>
<dbReference type="PRO" id="PR:P12687"/>
<dbReference type="Proteomes" id="UP000002311">
    <property type="component" value="Chromosome XIV"/>
</dbReference>
<dbReference type="RNAct" id="P12687">
    <property type="molecule type" value="protein"/>
</dbReference>
<dbReference type="GO" id="GO:0005743">
    <property type="term" value="C:mitochondrial inner membrane"/>
    <property type="evidence" value="ECO:0000303"/>
    <property type="project" value="ComplexPortal"/>
</dbReference>
<dbReference type="GO" id="GO:0005762">
    <property type="term" value="C:mitochondrial large ribosomal subunit"/>
    <property type="evidence" value="ECO:0000314"/>
    <property type="project" value="SGD"/>
</dbReference>
<dbReference type="GO" id="GO:0005739">
    <property type="term" value="C:mitochondrion"/>
    <property type="evidence" value="ECO:0007005"/>
    <property type="project" value="SGD"/>
</dbReference>
<dbReference type="GO" id="GO:0003735">
    <property type="term" value="F:structural constituent of ribosome"/>
    <property type="evidence" value="ECO:0000314"/>
    <property type="project" value="SGD"/>
</dbReference>
<dbReference type="GO" id="GO:0033617">
    <property type="term" value="P:mitochondrial cytochrome c oxidase assembly"/>
    <property type="evidence" value="ECO:0000315"/>
    <property type="project" value="SGD"/>
</dbReference>
<dbReference type="GO" id="GO:0032543">
    <property type="term" value="P:mitochondrial translation"/>
    <property type="evidence" value="ECO:0000303"/>
    <property type="project" value="ComplexPortal"/>
</dbReference>
<dbReference type="FunFam" id="2.40.50.100:FF:000042">
    <property type="entry name" value="50S ribosomal protein L27"/>
    <property type="match status" value="1"/>
</dbReference>
<dbReference type="Gene3D" id="2.40.50.100">
    <property type="match status" value="1"/>
</dbReference>
<dbReference type="InterPro" id="IPR001684">
    <property type="entry name" value="Ribosomal_bL27"/>
</dbReference>
<dbReference type="InterPro" id="IPR018261">
    <property type="entry name" value="Ribosomal_bL27_CS"/>
</dbReference>
<dbReference type="InterPro" id="IPR041244">
    <property type="entry name" value="Ribosomal_bL27m_C"/>
</dbReference>
<dbReference type="NCBIfam" id="TIGR00062">
    <property type="entry name" value="L27"/>
    <property type="match status" value="1"/>
</dbReference>
<dbReference type="PANTHER" id="PTHR15893:SF0">
    <property type="entry name" value="LARGE RIBOSOMAL SUBUNIT PROTEIN BL27M"/>
    <property type="match status" value="1"/>
</dbReference>
<dbReference type="PANTHER" id="PTHR15893">
    <property type="entry name" value="RIBOSOMAL PROTEIN L27"/>
    <property type="match status" value="1"/>
</dbReference>
<dbReference type="Pfam" id="PF01016">
    <property type="entry name" value="Ribosomal_L27"/>
    <property type="match status" value="1"/>
</dbReference>
<dbReference type="Pfam" id="PF18471">
    <property type="entry name" value="Ribosomal_L27_C"/>
    <property type="match status" value="1"/>
</dbReference>
<dbReference type="PRINTS" id="PR00063">
    <property type="entry name" value="RIBOSOMALL27"/>
</dbReference>
<dbReference type="SUPFAM" id="SSF110324">
    <property type="entry name" value="Ribosomal L27 protein-like"/>
    <property type="match status" value="1"/>
</dbReference>
<dbReference type="PROSITE" id="PS00831">
    <property type="entry name" value="RIBOSOMAL_L27"/>
    <property type="match status" value="1"/>
</dbReference>
<organism>
    <name type="scientific">Saccharomyces cerevisiae (strain ATCC 204508 / S288c)</name>
    <name type="common">Baker's yeast</name>
    <dbReference type="NCBI Taxonomy" id="559292"/>
    <lineage>
        <taxon>Eukaryota</taxon>
        <taxon>Fungi</taxon>
        <taxon>Dikarya</taxon>
        <taxon>Ascomycota</taxon>
        <taxon>Saccharomycotina</taxon>
        <taxon>Saccharomycetes</taxon>
        <taxon>Saccharomycetales</taxon>
        <taxon>Saccharomycetaceae</taxon>
        <taxon>Saccharomyces</taxon>
    </lineage>
</organism>
<comment type="function">
    <text evidence="11 12">Component of the mitochondrial ribosome (mitoribosome), a dedicated translation machinery responsible for the synthesis of mitochondrial genome-encoded proteins, including at least some of the essential transmembrane subunits of the mitochondrial respiratory chain. The mitoribosomes are attached to the mitochondrial inner membrane and translation products are cotranslationally integrated into the membrane.</text>
</comment>
<comment type="subunit">
    <text evidence="1 5 6">Component of the mitochondrial large ribosomal subunit (mt-LSU). Mature yeast 74S mitochondrial ribosomes consist of a small (37S) and a large (54S) subunit. The 37S small subunit contains a 15S ribosomal RNA (15S mt-rRNA) and 34 different proteins. The 54S large subunit contains a 21S rRNA (21S mt-rRNA) and 46 different proteins.</text>
</comment>
<comment type="subcellular location">
    <subcellularLocation>
        <location evidence="2 4">Mitochondrion</location>
    </subcellularLocation>
    <text evidence="7">Mitoribosomes are tethered to the mitochondrial inner membrane and spatially aligned with the membrane insertion machinery through two distinct membrane contact sites, formed by the 21S rRNA expansion segment 96-ES1 and the inner membrane protein MBA1.</text>
</comment>
<comment type="miscellaneous">
    <text evidence="3">Present with 2300 molecules/cell in log phase SD medium.</text>
</comment>
<comment type="similarity">
    <text evidence="10">Belongs to the bacterial ribosomal protein bL27 family.</text>
</comment>
<reference key="1">
    <citation type="journal article" date="1988" name="Mol. Cell. Biol.">
        <title>Structure and regulation of a nuclear gene in Saccharomyces cerevisiae that specifies MRP7, a protein of the large subunit of the mitochondrial ribosome.</title>
        <authorList>
            <person name="Fearon K."/>
            <person name="Mason T.L."/>
        </authorList>
    </citation>
    <scope>NUCLEOTIDE SEQUENCE [GENOMIC DNA]</scope>
    <source>
        <strain>ATCC 26109 / X2180 / NCYC 826</strain>
    </source>
</reference>
<reference key="2">
    <citation type="journal article" date="1994" name="Yeast">
        <title>Organization of the centromeric region of chromosome XIV in Saccharomyces cerevisiae.</title>
        <authorList>
            <person name="Lalo D."/>
            <person name="Stettler S."/>
            <person name="Mariotte S."/>
            <person name="Gendreau E."/>
            <person name="Thuriaux P."/>
        </authorList>
    </citation>
    <scope>NUCLEOTIDE SEQUENCE [GENOMIC DNA]</scope>
    <source>
        <strain>S288c / GRF88</strain>
    </source>
</reference>
<reference key="3">
    <citation type="journal article" date="1994" name="Yeast">
        <title>Nucleotide sequence analysis of an 8887 bp region of the left arm of yeast chromosome XIV, encompassing the centromere sequence.</title>
        <authorList>
            <person name="Verhasselt P."/>
            <person name="Aert R."/>
            <person name="Voet M."/>
            <person name="Volckaert G."/>
        </authorList>
    </citation>
    <scope>NUCLEOTIDE SEQUENCE [GENOMIC DNA]</scope>
    <source>
        <strain>ATCC 96604 / S288c / FY1679</strain>
    </source>
</reference>
<reference key="4">
    <citation type="journal article" date="1997" name="Nature">
        <title>The nucleotide sequence of Saccharomyces cerevisiae chromosome XIV and its evolutionary implications.</title>
        <authorList>
            <person name="Philippsen P."/>
            <person name="Kleine K."/>
            <person name="Poehlmann R."/>
            <person name="Duesterhoeft A."/>
            <person name="Hamberg K."/>
            <person name="Hegemann J.H."/>
            <person name="Obermaier B."/>
            <person name="Urrestarazu L.A."/>
            <person name="Aert R."/>
            <person name="Albermann K."/>
            <person name="Altmann R."/>
            <person name="Andre B."/>
            <person name="Baladron V."/>
            <person name="Ballesta J.P.G."/>
            <person name="Becam A.-M."/>
            <person name="Beinhauer J.D."/>
            <person name="Boskovic J."/>
            <person name="Buitrago M.J."/>
            <person name="Bussereau F."/>
            <person name="Coster F."/>
            <person name="Crouzet M."/>
            <person name="D'Angelo M."/>
            <person name="Dal Pero F."/>
            <person name="De Antoni A."/>
            <person name="del Rey F."/>
            <person name="Doignon F."/>
            <person name="Domdey H."/>
            <person name="Dubois E."/>
            <person name="Fiedler T.A."/>
            <person name="Fleig U."/>
            <person name="Floeth M."/>
            <person name="Fritz C."/>
            <person name="Gaillardin C."/>
            <person name="Garcia-Cantalejo J.M."/>
            <person name="Glansdorff N."/>
            <person name="Goffeau A."/>
            <person name="Gueldener U."/>
            <person name="Herbert C.J."/>
            <person name="Heumann K."/>
            <person name="Heuss-Neitzel D."/>
            <person name="Hilbert H."/>
            <person name="Hinni K."/>
            <person name="Iraqui Houssaini I."/>
            <person name="Jacquet M."/>
            <person name="Jimenez A."/>
            <person name="Jonniaux J.-L."/>
            <person name="Karpfinger-Hartl L."/>
            <person name="Lanfranchi G."/>
            <person name="Lepingle A."/>
            <person name="Levesque H."/>
            <person name="Lyck R."/>
            <person name="Maftahi M."/>
            <person name="Mallet L."/>
            <person name="Maurer C.T.C."/>
            <person name="Messenguy F."/>
            <person name="Mewes H.-W."/>
            <person name="Moestl D."/>
            <person name="Nasr F."/>
            <person name="Nicaud J.-M."/>
            <person name="Niedenthal R.K."/>
            <person name="Pandolfo D."/>
            <person name="Pierard A."/>
            <person name="Piravandi E."/>
            <person name="Planta R.J."/>
            <person name="Pohl T.M."/>
            <person name="Purnelle B."/>
            <person name="Rebischung C."/>
            <person name="Remacha M.A."/>
            <person name="Revuelta J.L."/>
            <person name="Rinke M."/>
            <person name="Saiz J.E."/>
            <person name="Sartorello F."/>
            <person name="Scherens B."/>
            <person name="Sen-Gupta M."/>
            <person name="Soler-Mira A."/>
            <person name="Urbanus J.H.M."/>
            <person name="Valle G."/>
            <person name="Van Dyck L."/>
            <person name="Verhasselt P."/>
            <person name="Vierendeels F."/>
            <person name="Vissers S."/>
            <person name="Voet M."/>
            <person name="Volckaert G."/>
            <person name="Wach A."/>
            <person name="Wambutt R."/>
            <person name="Wedler H."/>
            <person name="Zollner A."/>
            <person name="Hani J."/>
        </authorList>
    </citation>
    <scope>NUCLEOTIDE SEQUENCE [LARGE SCALE GENOMIC DNA]</scope>
    <source>
        <strain>ATCC 204508 / S288c</strain>
    </source>
</reference>
<reference key="5">
    <citation type="journal article" date="2014" name="G3 (Bethesda)">
        <title>The reference genome sequence of Saccharomyces cerevisiae: Then and now.</title>
        <authorList>
            <person name="Engel S.R."/>
            <person name="Dietrich F.S."/>
            <person name="Fisk D.G."/>
            <person name="Binkley G."/>
            <person name="Balakrishnan R."/>
            <person name="Costanzo M.C."/>
            <person name="Dwight S.S."/>
            <person name="Hitz B.C."/>
            <person name="Karra K."/>
            <person name="Nash R.S."/>
            <person name="Weng S."/>
            <person name="Wong E.D."/>
            <person name="Lloyd P."/>
            <person name="Skrzypek M.S."/>
            <person name="Miyasato S.R."/>
            <person name="Simison M."/>
            <person name="Cherry J.M."/>
        </authorList>
    </citation>
    <scope>GENOME REANNOTATION</scope>
    <source>
        <strain>ATCC 204508 / S288c</strain>
    </source>
</reference>
<reference key="6">
    <citation type="journal article" date="2007" name="Genome Res.">
        <title>Approaching a complete repository of sequence-verified protein-encoding clones for Saccharomyces cerevisiae.</title>
        <authorList>
            <person name="Hu Y."/>
            <person name="Rolfs A."/>
            <person name="Bhullar B."/>
            <person name="Murthy T.V.S."/>
            <person name="Zhu C."/>
            <person name="Berger M.F."/>
            <person name="Camargo A.A."/>
            <person name="Kelley F."/>
            <person name="McCarron S."/>
            <person name="Jepson D."/>
            <person name="Richardson A."/>
            <person name="Raphael J."/>
            <person name="Moreira D."/>
            <person name="Taycher E."/>
            <person name="Zuo D."/>
            <person name="Mohr S."/>
            <person name="Kane M.F."/>
            <person name="Williamson J."/>
            <person name="Simpson A.J.G."/>
            <person name="Bulyk M.L."/>
            <person name="Harlow E."/>
            <person name="Marsischky G."/>
            <person name="Kolodner R.D."/>
            <person name="LaBaer J."/>
        </authorList>
    </citation>
    <scope>NUCLEOTIDE SEQUENCE [GENOMIC DNA]</scope>
    <source>
        <strain>ATCC 204508 / S288c</strain>
    </source>
</reference>
<reference key="7">
    <citation type="journal article" date="1989" name="Mol. Gen. Genet.">
        <title>Cloning and analysis of the nuclear genes for two mitochondrial ribosomal proteins in yeast.</title>
        <authorList>
            <person name="Matsushita Y."/>
            <person name="Kitakawa M."/>
            <person name="Isono K."/>
        </authorList>
    </citation>
    <scope>PROTEIN SEQUENCE OF N-TERMINUS</scope>
</reference>
<reference key="8">
    <citation type="journal article" date="1991" name="FEBS Lett.">
        <title>Extended N-terminal sequencing of proteins of the large ribosomal subunit from yeast mitochondria.</title>
        <authorList>
            <person name="Grohmann L."/>
            <person name="Graack H.-R."/>
            <person name="Kruft V."/>
            <person name="Choli T."/>
            <person name="Goldschmidt-Reisin S."/>
            <person name="Kitakawa M."/>
        </authorList>
    </citation>
    <scope>PROTEIN SEQUENCE OF 28-50</scope>
    <scope>SUBUNIT</scope>
    <source>
        <strain>07173</strain>
    </source>
</reference>
<reference key="9">
    <citation type="journal article" date="1993" name="Biochem. Mol. Biol. Int.">
        <title>Transport of mitoribosomal proteins, YmL13 and MRP7, into isolated mitochondria of Saccharomyces cerevisiae.</title>
        <authorList>
            <person name="Matsushita Y."/>
            <person name="Isono K."/>
        </authorList>
    </citation>
    <scope>TRANSPORT INTO MITOCHONDRIA</scope>
</reference>
<reference key="10">
    <citation type="journal article" date="2002" name="Eur. J. Biochem.">
        <title>Tag-mediated isolation of yeast mitochondrial ribosome and mass spectrometric identification of its new components.</title>
        <authorList>
            <person name="Gan X."/>
            <person name="Kitakawa M."/>
            <person name="Yoshino K."/>
            <person name="Oshiro N."/>
            <person name="Yonezawa K."/>
            <person name="Isono K."/>
        </authorList>
    </citation>
    <scope>IDENTIFICATION IN THE MITOCHONDRIAL RIBOSOMAL LARGE COMPLEX</scope>
    <scope>IDENTIFICATION BY MASS SPECTROMETRY</scope>
</reference>
<reference key="11">
    <citation type="journal article" date="2003" name="Nature">
        <title>Global analysis of protein localization in budding yeast.</title>
        <authorList>
            <person name="Huh W.-K."/>
            <person name="Falvo J.V."/>
            <person name="Gerke L.C."/>
            <person name="Carroll A.S."/>
            <person name="Howson R.W."/>
            <person name="Weissman J.S."/>
            <person name="O'Shea E.K."/>
        </authorList>
    </citation>
    <scope>SUBCELLULAR LOCATION [LARGE SCALE ANALYSIS]</scope>
</reference>
<reference key="12">
    <citation type="journal article" date="2003" name="Nature">
        <title>Global analysis of protein expression in yeast.</title>
        <authorList>
            <person name="Ghaemmaghami S."/>
            <person name="Huh W.-K."/>
            <person name="Bower K."/>
            <person name="Howson R.W."/>
            <person name="Belle A."/>
            <person name="Dephoure N."/>
            <person name="O'Shea E.K."/>
            <person name="Weissman J.S."/>
        </authorList>
    </citation>
    <scope>LEVEL OF PROTEIN EXPRESSION [LARGE SCALE ANALYSIS]</scope>
</reference>
<reference key="13">
    <citation type="journal article" date="2003" name="Proc. Natl. Acad. Sci. U.S.A.">
        <title>The proteome of Saccharomyces cerevisiae mitochondria.</title>
        <authorList>
            <person name="Sickmann A."/>
            <person name="Reinders J."/>
            <person name="Wagner Y."/>
            <person name="Joppich C."/>
            <person name="Zahedi R.P."/>
            <person name="Meyer H.E."/>
            <person name="Schoenfisch B."/>
            <person name="Perschil I."/>
            <person name="Chacinska A."/>
            <person name="Guiard B."/>
            <person name="Rehling P."/>
            <person name="Pfanner N."/>
            <person name="Meisinger C."/>
        </authorList>
    </citation>
    <scope>SUBCELLULAR LOCATION [LARGE SCALE ANALYSIS]</scope>
    <source>
        <strain>ATCC 76625 / YPH499</strain>
    </source>
</reference>
<reference key="14">
    <citation type="journal article" date="2015" name="Nat. Commun.">
        <title>Organization of the mitochondrial translation machinery studied in situ by cryoelectron tomography.</title>
        <authorList>
            <person name="Pfeffer S."/>
            <person name="Woellhaf M.W."/>
            <person name="Herrmann J.M."/>
            <person name="Forster F."/>
        </authorList>
    </citation>
    <scope>SUBCELLULAR LOCATION</scope>
</reference>
<reference key="15">
    <citation type="journal article" date="2014" name="Science">
        <title>Structure of the yeast mitochondrial large ribosomal subunit.</title>
        <authorList>
            <person name="Amunts A."/>
            <person name="Brown A."/>
            <person name="Bai X.C."/>
            <person name="Llacer J.L."/>
            <person name="Hussain T."/>
            <person name="Emsley P."/>
            <person name="Long F."/>
            <person name="Murshudov G."/>
            <person name="Scheres S.H."/>
            <person name="Ramakrishnan V."/>
        </authorList>
    </citation>
    <scope>STRUCTURE BY ELECTRON MICROSCOPY (3.20 ANGSTROMS)</scope>
    <scope>SUBUNIT</scope>
</reference>
<sequence length="371" mass="43227">MWNPILLDTSSFSFQKHVSGVFLQVRNATKRAAGSRTSMKDSAGRRLGPKKYEGQDVSTGEIIMRQRGTKFYPGENVGIGKDHSIFALEPGVVRYYLDPFHPKRKFIGVALRRDLKLPSPHFEPTVRRFGRFELTNKRAAYKEENSISRKDYLAKPNILKQLEVRESKRKELQDKLSKVLRDELKLDIKDIELATSYLIRVRASLKNGYPIEDARFNSRYYLKEEERLKARRESWTNEKLSESLSKIDECSDLLNSSTSFNNKLELHQYISEQEKQALKAKLLEDLEKSQHLETKKDKNYIKALFKDACNFLTLSEEVHLRRKYLKSVFPETDSTVETKSGKKSIVSRRFDYTKNKVEVIARSRRAFLSKL</sequence>
<name>RM02_YEAST</name>
<protein>
    <recommendedName>
        <fullName evidence="9">Large ribosomal subunit protein bL27m</fullName>
    </recommendedName>
    <alternativeName>
        <fullName>54S ribosomal protein L2, mitochondrial</fullName>
    </alternativeName>
    <alternativeName>
        <fullName>YMR6</fullName>
    </alternativeName>
    <alternativeName>
        <fullName>YmL2</fullName>
    </alternativeName>
</protein>
<evidence type="ECO:0000269" key="1">
    <source>
    </source>
</evidence>
<evidence type="ECO:0000269" key="2">
    <source>
    </source>
</evidence>
<evidence type="ECO:0000269" key="3">
    <source>
    </source>
</evidence>
<evidence type="ECO:0000269" key="4">
    <source>
    </source>
</evidence>
<evidence type="ECO:0000269" key="5">
    <source>
    </source>
</evidence>
<evidence type="ECO:0000269" key="6">
    <source>
    </source>
</evidence>
<evidence type="ECO:0000269" key="7">
    <source>
    </source>
</evidence>
<evidence type="ECO:0000269" key="8">
    <source>
    </source>
</evidence>
<evidence type="ECO:0000303" key="9">
    <source>
    </source>
</evidence>
<evidence type="ECO:0000305" key="10"/>
<evidence type="ECO:0000305" key="11">
    <source>
    </source>
</evidence>
<evidence type="ECO:0000305" key="12">
    <source>
    </source>
</evidence>
<accession>P12687</accession>
<accession>D6W1H2</accession>
<feature type="transit peptide" description="Mitochondrion" evidence="5 8">
    <location>
        <begin position="1"/>
        <end position="27"/>
    </location>
</feature>
<feature type="chain" id="PRO_0000030503" description="Large ribosomal subunit protein bL27m">
    <location>
        <begin position="28"/>
        <end position="371"/>
    </location>
</feature>
<feature type="sequence conflict" description="In Ref. 7; AA sequence." evidence="10" ref="7">
    <original>AT</original>
    <variation>SG</variation>
    <location>
        <begin position="28"/>
        <end position="29"/>
    </location>
</feature>
<feature type="sequence conflict" description="In Ref. 3; CAA54379." evidence="10" ref="3">
    <original>F</original>
    <variation>L</variation>
    <location>
        <position position="350"/>
    </location>
</feature>
<gene>
    <name type="primary">MRP7</name>
    <name type="synonym">MRPL2</name>
    <name type="ordered locus">YNL005C</name>
    <name type="ORF">N2007</name>
</gene>
<proteinExistence type="evidence at protein level"/>